<sequence length="311" mass="35989">MEQFDQLVLNSISAKALKSYLTTKIAEAIDELAAKKNSPKKKAQTKKPENRIPLDLINKNFVSKFGLKGYKDGVLNSLICSLVENNYFENGKLKRGKHDELVLLDIEKEILARIDENSSLNIDVLDVKVLANRLRTNADRFEFKGHTYYLEQNKTEDIINQLIKNSAISMDMKNTIKDTFYMISDELLDVFKNRLFKCPQVKDNIISRARLYEYFIKATKPDDSKIYVILKDDNIAKILNIETIVIDHFIYTKHSLLVSSISNQIDKYSKKFNDQFYSSISEYIKDNEKINLSKVIEYLTISTVKIENTVE</sequence>
<evidence type="ECO:0000250" key="1"/>
<evidence type="ECO:0000305" key="2"/>
<organism>
    <name type="scientific">Fowlpox virus (strain NVSL)</name>
    <name type="common">FPV</name>
    <dbReference type="NCBI Taxonomy" id="928301"/>
    <lineage>
        <taxon>Viruses</taxon>
        <taxon>Varidnaviria</taxon>
        <taxon>Bamfordvirae</taxon>
        <taxon>Nucleocytoviricota</taxon>
        <taxon>Pokkesviricetes</taxon>
        <taxon>Chitovirales</taxon>
        <taxon>Poxviridae</taxon>
        <taxon>Chordopoxvirinae</taxon>
        <taxon>Avipoxvirus</taxon>
        <taxon>Fowlpox virus</taxon>
    </lineage>
</organism>
<gene>
    <name type="ordered locus">FPV090</name>
    <name type="ORF">FPI1L</name>
</gene>
<proteinExistence type="evidence at transcript level"/>
<organismHost>
    <name type="scientific">Vertebrata</name>
    <dbReference type="NCBI Taxonomy" id="7742"/>
</organismHost>
<comment type="function">
    <text evidence="1">Late DNA-binding protein which binds to the hairpin form of the viral telomeric sequence. Required for the production of mature virions (MV) (By similarity).</text>
</comment>
<comment type="subcellular location">
    <subcellularLocation>
        <location evidence="1">Virion</location>
    </subcellularLocation>
    <text evidence="1">Present in the virus core.</text>
</comment>
<comment type="induction">
    <text>Expressed late in the viral replicative cycle.</text>
</comment>
<comment type="miscellaneous">
    <text evidence="1">Each virion contains approximately 670 molecules of I1.</text>
</comment>
<comment type="similarity">
    <text evidence="2">Belongs to the chordopoxvirinae I1 family.</text>
</comment>
<feature type="chain" id="PRO_0000099565" description="Telomere-binding protein I1 homolog">
    <location>
        <begin position="1"/>
        <end position="311"/>
    </location>
</feature>
<feature type="sequence conflict" description="In Ref. 1; CAA11291." evidence="2" ref="1">
    <original>YS</original>
    <variation>LC</variation>
    <location>
        <begin position="277"/>
        <end position="278"/>
    </location>
</feature>
<keyword id="KW-0238">DNA-binding</keyword>
<keyword id="KW-0426">Late protein</keyword>
<keyword id="KW-1185">Reference proteome</keyword>
<keyword id="KW-0946">Virion</keyword>
<protein>
    <recommendedName>
        <fullName>Telomere-binding protein I1 homolog</fullName>
    </recommendedName>
    <alternativeName>
        <fullName>Protein FPV90</fullName>
    </alternativeName>
</protein>
<dbReference type="EMBL" id="AF198100">
    <property type="protein sequence ID" value="AAF44434.1"/>
    <property type="molecule type" value="Genomic_DNA"/>
</dbReference>
<dbReference type="EMBL" id="AJ223385">
    <property type="protein sequence ID" value="CAA11291.1"/>
    <property type="molecule type" value="Genomic_DNA"/>
</dbReference>
<dbReference type="RefSeq" id="NP_039053.1">
    <property type="nucleotide sequence ID" value="NC_002188.1"/>
</dbReference>
<dbReference type="GeneID" id="1486638"/>
<dbReference type="KEGG" id="vg:1486638"/>
<dbReference type="Proteomes" id="UP000008597">
    <property type="component" value="Segment"/>
</dbReference>
<dbReference type="GO" id="GO:0044423">
    <property type="term" value="C:virion component"/>
    <property type="evidence" value="ECO:0007669"/>
    <property type="project" value="UniProtKB-KW"/>
</dbReference>
<dbReference type="GO" id="GO:0003677">
    <property type="term" value="F:DNA binding"/>
    <property type="evidence" value="ECO:0007669"/>
    <property type="project" value="UniProtKB-KW"/>
</dbReference>
<dbReference type="InterPro" id="IPR004969">
    <property type="entry name" value="Poxvirus_I1"/>
</dbReference>
<dbReference type="Pfam" id="PF03289">
    <property type="entry name" value="Pox_I1"/>
    <property type="match status" value="1"/>
</dbReference>
<dbReference type="PIRSF" id="PIRSF015625">
    <property type="entry name" value="VAC_I1L"/>
    <property type="match status" value="1"/>
</dbReference>
<name>I1_FOWPN</name>
<accession>Q9J5C9</accession>
<accession>O72898</accession>
<reference key="1">
    <citation type="journal article" date="1998" name="Virus Genes">
        <title>Nucleotide sequence of the 4.3 kbp BamHI-N fragment of fowlpox virus FP9.</title>
        <authorList>
            <person name="Pollitt E."/>
            <person name="Skinner M.A."/>
            <person name="Heaphy S."/>
        </authorList>
    </citation>
    <scope>NUCLEOTIDE SEQUENCE [GENOMIC DNA]</scope>
    <source>
        <strain>FP-9 / Isolate HP-440</strain>
    </source>
</reference>
<reference key="2">
    <citation type="journal article" date="2000" name="J. Virol.">
        <title>The genome of fowlpox virus.</title>
        <authorList>
            <person name="Afonso C.L."/>
            <person name="Tulman E.R."/>
            <person name="Lu Z."/>
            <person name="Zsak L."/>
            <person name="Kutish G.F."/>
            <person name="Rock D.L."/>
        </authorList>
    </citation>
    <scope>NUCLEOTIDE SEQUENCE [LARGE SCALE GENOMIC DNA]</scope>
</reference>